<accession>A4TCN7</accession>
<gene>
    <name evidence="1" type="primary">nrdR</name>
    <name type="ordered locus">Mflv_3954</name>
</gene>
<comment type="function">
    <text evidence="1">Negatively regulates transcription of bacterial ribonucleotide reductase nrd genes and operons by binding to NrdR-boxes.</text>
</comment>
<comment type="cofactor">
    <cofactor evidence="1">
        <name>Zn(2+)</name>
        <dbReference type="ChEBI" id="CHEBI:29105"/>
    </cofactor>
    <text evidence="1">Binds 1 zinc ion.</text>
</comment>
<comment type="similarity">
    <text evidence="1">Belongs to the NrdR family.</text>
</comment>
<feature type="chain" id="PRO_1000080777" description="Transcriptional repressor NrdR">
    <location>
        <begin position="1"/>
        <end position="154"/>
    </location>
</feature>
<feature type="domain" description="ATP-cone" evidence="1">
    <location>
        <begin position="46"/>
        <end position="136"/>
    </location>
</feature>
<feature type="zinc finger region" evidence="1">
    <location>
        <begin position="3"/>
        <end position="34"/>
    </location>
</feature>
<organism>
    <name type="scientific">Mycolicibacterium gilvum (strain PYR-GCK)</name>
    <name type="common">Mycobacterium gilvum (strain PYR-GCK)</name>
    <dbReference type="NCBI Taxonomy" id="350054"/>
    <lineage>
        <taxon>Bacteria</taxon>
        <taxon>Bacillati</taxon>
        <taxon>Actinomycetota</taxon>
        <taxon>Actinomycetes</taxon>
        <taxon>Mycobacteriales</taxon>
        <taxon>Mycobacteriaceae</taxon>
        <taxon>Mycolicibacterium</taxon>
    </lineage>
</organism>
<reference key="1">
    <citation type="submission" date="2007-04" db="EMBL/GenBank/DDBJ databases">
        <title>Complete sequence of chromosome of Mycobacterium gilvum PYR-GCK.</title>
        <authorList>
            <consortium name="US DOE Joint Genome Institute"/>
            <person name="Copeland A."/>
            <person name="Lucas S."/>
            <person name="Lapidus A."/>
            <person name="Barry K."/>
            <person name="Detter J.C."/>
            <person name="Glavina del Rio T."/>
            <person name="Hammon N."/>
            <person name="Israni S."/>
            <person name="Dalin E."/>
            <person name="Tice H."/>
            <person name="Pitluck S."/>
            <person name="Chain P."/>
            <person name="Malfatti S."/>
            <person name="Shin M."/>
            <person name="Vergez L."/>
            <person name="Schmutz J."/>
            <person name="Larimer F."/>
            <person name="Land M."/>
            <person name="Hauser L."/>
            <person name="Kyrpides N."/>
            <person name="Mikhailova N."/>
            <person name="Miller C."/>
            <person name="Richardson P."/>
        </authorList>
    </citation>
    <scope>NUCLEOTIDE SEQUENCE [LARGE SCALE GENOMIC DNA]</scope>
    <source>
        <strain>PYR-GCK</strain>
    </source>
</reference>
<dbReference type="EMBL" id="CP000656">
    <property type="protein sequence ID" value="ABP46425.1"/>
    <property type="molecule type" value="Genomic_DNA"/>
</dbReference>
<dbReference type="SMR" id="A4TCN7"/>
<dbReference type="STRING" id="350054.Mflv_3954"/>
<dbReference type="KEGG" id="mgi:Mflv_3954"/>
<dbReference type="eggNOG" id="COG1327">
    <property type="taxonomic scope" value="Bacteria"/>
</dbReference>
<dbReference type="HOGENOM" id="CLU_108412_1_0_11"/>
<dbReference type="OrthoDB" id="9807461at2"/>
<dbReference type="GO" id="GO:0005524">
    <property type="term" value="F:ATP binding"/>
    <property type="evidence" value="ECO:0007669"/>
    <property type="project" value="UniProtKB-KW"/>
</dbReference>
<dbReference type="GO" id="GO:0003677">
    <property type="term" value="F:DNA binding"/>
    <property type="evidence" value="ECO:0007669"/>
    <property type="project" value="UniProtKB-KW"/>
</dbReference>
<dbReference type="GO" id="GO:0008270">
    <property type="term" value="F:zinc ion binding"/>
    <property type="evidence" value="ECO:0007669"/>
    <property type="project" value="UniProtKB-UniRule"/>
</dbReference>
<dbReference type="GO" id="GO:0045892">
    <property type="term" value="P:negative regulation of DNA-templated transcription"/>
    <property type="evidence" value="ECO:0007669"/>
    <property type="project" value="UniProtKB-UniRule"/>
</dbReference>
<dbReference type="HAMAP" id="MF_00440">
    <property type="entry name" value="NrdR"/>
    <property type="match status" value="1"/>
</dbReference>
<dbReference type="InterPro" id="IPR005144">
    <property type="entry name" value="ATP-cone_dom"/>
</dbReference>
<dbReference type="InterPro" id="IPR055173">
    <property type="entry name" value="NrdR-like_N"/>
</dbReference>
<dbReference type="InterPro" id="IPR003796">
    <property type="entry name" value="RNR_NrdR-like"/>
</dbReference>
<dbReference type="NCBIfam" id="TIGR00244">
    <property type="entry name" value="transcriptional regulator NrdR"/>
    <property type="match status" value="1"/>
</dbReference>
<dbReference type="PANTHER" id="PTHR30455">
    <property type="entry name" value="TRANSCRIPTIONAL REPRESSOR NRDR"/>
    <property type="match status" value="1"/>
</dbReference>
<dbReference type="PANTHER" id="PTHR30455:SF2">
    <property type="entry name" value="TRANSCRIPTIONAL REPRESSOR NRDR"/>
    <property type="match status" value="1"/>
</dbReference>
<dbReference type="Pfam" id="PF03477">
    <property type="entry name" value="ATP-cone"/>
    <property type="match status" value="1"/>
</dbReference>
<dbReference type="Pfam" id="PF22811">
    <property type="entry name" value="Zn_ribbon_NrdR"/>
    <property type="match status" value="1"/>
</dbReference>
<dbReference type="PROSITE" id="PS51161">
    <property type="entry name" value="ATP_CONE"/>
    <property type="match status" value="1"/>
</dbReference>
<protein>
    <recommendedName>
        <fullName evidence="1">Transcriptional repressor NrdR</fullName>
    </recommendedName>
</protein>
<keyword id="KW-0067">ATP-binding</keyword>
<keyword id="KW-0238">DNA-binding</keyword>
<keyword id="KW-0479">Metal-binding</keyword>
<keyword id="KW-0547">Nucleotide-binding</keyword>
<keyword id="KW-0678">Repressor</keyword>
<keyword id="KW-0804">Transcription</keyword>
<keyword id="KW-0805">Transcription regulation</keyword>
<keyword id="KW-0862">Zinc</keyword>
<keyword id="KW-0863">Zinc-finger</keyword>
<proteinExistence type="inferred from homology"/>
<sequence>MHCPFCRHPDSRVVDSRETDEGQAIRRRRSCPECGRRFTTVETAVLAVVKRSGVTEPFSREKVIRGVRRACQGRQVDDDALNKLAQQVEDAVRATGSPEVPANEVGLAILGPLRDLDEVAYLRFASVYRSFSSAEDFEREIEALRAHREVSARS</sequence>
<name>NRDR_MYCGI</name>
<evidence type="ECO:0000255" key="1">
    <source>
        <dbReference type="HAMAP-Rule" id="MF_00440"/>
    </source>
</evidence>